<reference key="1">
    <citation type="journal article" date="2000" name="Nature">
        <title>Sequence and analysis of chromosome 5 of the plant Arabidopsis thaliana.</title>
        <authorList>
            <person name="Tabata S."/>
            <person name="Kaneko T."/>
            <person name="Nakamura Y."/>
            <person name="Kotani H."/>
            <person name="Kato T."/>
            <person name="Asamizu E."/>
            <person name="Miyajima N."/>
            <person name="Sasamoto S."/>
            <person name="Kimura T."/>
            <person name="Hosouchi T."/>
            <person name="Kawashima K."/>
            <person name="Kohara M."/>
            <person name="Matsumoto M."/>
            <person name="Matsuno A."/>
            <person name="Muraki A."/>
            <person name="Nakayama S."/>
            <person name="Nakazaki N."/>
            <person name="Naruo K."/>
            <person name="Okumura S."/>
            <person name="Shinpo S."/>
            <person name="Takeuchi C."/>
            <person name="Wada T."/>
            <person name="Watanabe A."/>
            <person name="Yamada M."/>
            <person name="Yasuda M."/>
            <person name="Sato S."/>
            <person name="de la Bastide M."/>
            <person name="Huang E."/>
            <person name="Spiegel L."/>
            <person name="Gnoj L."/>
            <person name="O'Shaughnessy A."/>
            <person name="Preston R."/>
            <person name="Habermann K."/>
            <person name="Murray J."/>
            <person name="Johnson D."/>
            <person name="Rohlfing T."/>
            <person name="Nelson J."/>
            <person name="Stoneking T."/>
            <person name="Pepin K."/>
            <person name="Spieth J."/>
            <person name="Sekhon M."/>
            <person name="Armstrong J."/>
            <person name="Becker M."/>
            <person name="Belter E."/>
            <person name="Cordum H."/>
            <person name="Cordes M."/>
            <person name="Courtney L."/>
            <person name="Courtney W."/>
            <person name="Dante M."/>
            <person name="Du H."/>
            <person name="Edwards J."/>
            <person name="Fryman J."/>
            <person name="Haakensen B."/>
            <person name="Lamar E."/>
            <person name="Latreille P."/>
            <person name="Leonard S."/>
            <person name="Meyer R."/>
            <person name="Mulvaney E."/>
            <person name="Ozersky P."/>
            <person name="Riley A."/>
            <person name="Strowmatt C."/>
            <person name="Wagner-McPherson C."/>
            <person name="Wollam A."/>
            <person name="Yoakum M."/>
            <person name="Bell M."/>
            <person name="Dedhia N."/>
            <person name="Parnell L."/>
            <person name="Shah R."/>
            <person name="Rodriguez M."/>
            <person name="Hoon See L."/>
            <person name="Vil D."/>
            <person name="Baker J."/>
            <person name="Kirchoff K."/>
            <person name="Toth K."/>
            <person name="King L."/>
            <person name="Bahret A."/>
            <person name="Miller B."/>
            <person name="Marra M.A."/>
            <person name="Martienssen R."/>
            <person name="McCombie W.R."/>
            <person name="Wilson R.K."/>
            <person name="Murphy G."/>
            <person name="Bancroft I."/>
            <person name="Volckaert G."/>
            <person name="Wambutt R."/>
            <person name="Duesterhoeft A."/>
            <person name="Stiekema W."/>
            <person name="Pohl T."/>
            <person name="Entian K.-D."/>
            <person name="Terryn N."/>
            <person name="Hartley N."/>
            <person name="Bent E."/>
            <person name="Johnson S."/>
            <person name="Langham S.-A."/>
            <person name="McCullagh B."/>
            <person name="Robben J."/>
            <person name="Grymonprez B."/>
            <person name="Zimmermann W."/>
            <person name="Ramsperger U."/>
            <person name="Wedler H."/>
            <person name="Balke K."/>
            <person name="Wedler E."/>
            <person name="Peters S."/>
            <person name="van Staveren M."/>
            <person name="Dirkse W."/>
            <person name="Mooijman P."/>
            <person name="Klein Lankhorst R."/>
            <person name="Weitzenegger T."/>
            <person name="Bothe G."/>
            <person name="Rose M."/>
            <person name="Hauf J."/>
            <person name="Berneiser S."/>
            <person name="Hempel S."/>
            <person name="Feldpausch M."/>
            <person name="Lamberth S."/>
            <person name="Villarroel R."/>
            <person name="Gielen J."/>
            <person name="Ardiles W."/>
            <person name="Bents O."/>
            <person name="Lemcke K."/>
            <person name="Kolesov G."/>
            <person name="Mayer K.F.X."/>
            <person name="Rudd S."/>
            <person name="Schoof H."/>
            <person name="Schueller C."/>
            <person name="Zaccaria P."/>
            <person name="Mewes H.-W."/>
            <person name="Bevan M."/>
            <person name="Fransz P.F."/>
        </authorList>
    </citation>
    <scope>NUCLEOTIDE SEQUENCE [LARGE SCALE GENOMIC DNA]</scope>
    <source>
        <strain>cv. Columbia</strain>
    </source>
</reference>
<reference key="2">
    <citation type="journal article" date="2017" name="Plant J.">
        <title>Araport11: a complete reannotation of the Arabidopsis thaliana reference genome.</title>
        <authorList>
            <person name="Cheng C.Y."/>
            <person name="Krishnakumar V."/>
            <person name="Chan A.P."/>
            <person name="Thibaud-Nissen F."/>
            <person name="Schobel S."/>
            <person name="Town C.D."/>
        </authorList>
    </citation>
    <scope>GENOME REANNOTATION</scope>
    <source>
        <strain>cv. Columbia</strain>
    </source>
</reference>
<reference key="3">
    <citation type="journal article" date="2003" name="Science">
        <title>Empirical analysis of transcriptional activity in the Arabidopsis genome.</title>
        <authorList>
            <person name="Yamada K."/>
            <person name="Lim J."/>
            <person name="Dale J.M."/>
            <person name="Chen H."/>
            <person name="Shinn P."/>
            <person name="Palm C.J."/>
            <person name="Southwick A.M."/>
            <person name="Wu H.C."/>
            <person name="Kim C.J."/>
            <person name="Nguyen M."/>
            <person name="Pham P.K."/>
            <person name="Cheuk R.F."/>
            <person name="Karlin-Newmann G."/>
            <person name="Liu S.X."/>
            <person name="Lam B."/>
            <person name="Sakano H."/>
            <person name="Wu T."/>
            <person name="Yu G."/>
            <person name="Miranda M."/>
            <person name="Quach H.L."/>
            <person name="Tripp M."/>
            <person name="Chang C.H."/>
            <person name="Lee J.M."/>
            <person name="Toriumi M.J."/>
            <person name="Chan M.M."/>
            <person name="Tang C.C."/>
            <person name="Onodera C.S."/>
            <person name="Deng J.M."/>
            <person name="Akiyama K."/>
            <person name="Ansari Y."/>
            <person name="Arakawa T."/>
            <person name="Banh J."/>
            <person name="Banno F."/>
            <person name="Bowser L."/>
            <person name="Brooks S.Y."/>
            <person name="Carninci P."/>
            <person name="Chao Q."/>
            <person name="Choy N."/>
            <person name="Enju A."/>
            <person name="Goldsmith A.D."/>
            <person name="Gurjal M."/>
            <person name="Hansen N.F."/>
            <person name="Hayashizaki Y."/>
            <person name="Johnson-Hopson C."/>
            <person name="Hsuan V.W."/>
            <person name="Iida K."/>
            <person name="Karnes M."/>
            <person name="Khan S."/>
            <person name="Koesema E."/>
            <person name="Ishida J."/>
            <person name="Jiang P.X."/>
            <person name="Jones T."/>
            <person name="Kawai J."/>
            <person name="Kamiya A."/>
            <person name="Meyers C."/>
            <person name="Nakajima M."/>
            <person name="Narusaka M."/>
            <person name="Seki M."/>
            <person name="Sakurai T."/>
            <person name="Satou M."/>
            <person name="Tamse R."/>
            <person name="Vaysberg M."/>
            <person name="Wallender E.K."/>
            <person name="Wong C."/>
            <person name="Yamamura Y."/>
            <person name="Yuan S."/>
            <person name="Shinozaki K."/>
            <person name="Davis R.W."/>
            <person name="Theologis A."/>
            <person name="Ecker J.R."/>
        </authorList>
    </citation>
    <scope>NUCLEOTIDE SEQUENCE [LARGE SCALE MRNA] (ISOFORM 1)</scope>
    <source>
        <strain>cv. Columbia</strain>
    </source>
</reference>
<reference key="4">
    <citation type="journal article" date="2004" name="Gene">
        <title>TDPOZ, a family of bipartite animal and plant proteins that contain the TRAF (TD) and POZ/BTB domains.</title>
        <authorList>
            <person name="Huang C.-J."/>
            <person name="Chen C.-Y."/>
            <person name="Chen H.-H."/>
            <person name="Tsai S.-F."/>
            <person name="Choo K.-B."/>
        </authorList>
    </citation>
    <scope>GENE FAMILY</scope>
</reference>
<reference key="5">
    <citation type="journal article" date="2005" name="J. Biol. Chem.">
        <title>Cullins 3a and 3b assemble with members of the broad complex/tramtrack/bric-a-brac (BTB) protein family to form essential ubiquitin-protein ligases (E3s) in Arabidopsis.</title>
        <authorList>
            <person name="Gingerich D.J."/>
            <person name="Gagne J.M."/>
            <person name="Salter D.W."/>
            <person name="Hellmann H."/>
            <person name="Estelle M."/>
            <person name="Ma L."/>
            <person name="Vierstra R.D."/>
        </authorList>
    </citation>
    <scope>INTERACTION WITH CUL3A AND CUL3B</scope>
</reference>
<reference key="6">
    <citation type="journal article" date="2005" name="Plant Cell">
        <title>Arabidopsis has two redundant Cullin3 proteins that are essential for embryo development and that interact with RBX1 and BTB proteins to form multisubunit E3 ubiquitin ligase complexes in vivo.</title>
        <authorList>
            <person name="Figueroa P."/>
            <person name="Gusmaroli G."/>
            <person name="Serino G."/>
            <person name="Habashi J."/>
            <person name="Ma L."/>
            <person name="Shen Y."/>
            <person name="Feng S."/>
            <person name="Bostick M."/>
            <person name="Callis J."/>
            <person name="Hellmann H."/>
            <person name="Deng X.W."/>
        </authorList>
    </citation>
    <scope>INTERACTION WITH CUL3A</scope>
</reference>
<reference key="7">
    <citation type="journal article" date="2005" name="Plant Physiol.">
        <title>Arabidopsis AtCUL3a and AtCUL3b form complexes with members of the BTB/POZ-MATH protein family.</title>
        <authorList>
            <person name="Weber H."/>
            <person name="Bernhardt A."/>
            <person name="Dieterle M."/>
            <person name="Hano P."/>
            <person name="Mutlu A."/>
            <person name="Estelle M."/>
            <person name="Genschik P."/>
            <person name="Hellmann H."/>
        </authorList>
    </citation>
    <scope>GENE FAMILY</scope>
    <scope>NOMENCLATURE</scope>
    <scope>FUNCTION</scope>
    <scope>IDENTIFICATION IN THE CUL3-RBX1-BTB UBIQUITIN-PROTEIN LIGASE COMPLEX</scope>
    <scope>INTERACTION WITH CUL3A AND CUL3B</scope>
    <scope>SUBUNIT</scope>
    <scope>TISSUE SPECIFICITY</scope>
</reference>
<reference key="8">
    <citation type="journal article" date="2009" name="FEBS J.">
        <title>Arabidopsis thaliana BTB/ POZ-MATH proteins interact with members of the ERF/AP2 transcription factor family.</title>
        <authorList>
            <person name="Weber H."/>
            <person name="Hellmann H."/>
        </authorList>
    </citation>
    <scope>INTERACTION WITH RAP2-4 AND RAP2-13</scope>
    <scope>TISSUE SPECIFICITY</scope>
    <scope>INDUCTION</scope>
    <scope>SUBCELLULAR LOCATION</scope>
</reference>
<reference key="9">
    <citation type="journal article" date="2014" name="Mol. Plant">
        <title>Identification of Arabidopsis MYB56 as a novel substrate for CRL3BPM E3 ligases.</title>
        <authorList>
            <person name="Chen L."/>
            <person name="Bernhardt A."/>
            <person name="Lee J."/>
            <person name="Hellmann H."/>
        </authorList>
    </citation>
    <scope>INTERACTION WITH MYB56</scope>
    <source>
        <strain>cv. Columbia</strain>
    </source>
</reference>
<sequence>MGTTRVCSEVSSGSSKSLSQSLTVSTSTTETVNGFHEFKICGYSLAKGVGVGKYVASDTFMVGGYSWAIYFYPDGKSPEDNSSYVSLFIALASEGADVRALFELTLVDQSGNGKHKVHSHFGRALDSGPYTLKYRGSMWGYKRFFRRSSLESSDYLKENSLLVRCRVGVVKSVTEGPRYYNIPVPVSNLGQQLGNLLESGKGCDVVFQVDGETFNAHKLVLATRSPVFNAQLFGPLGDRNTKCITIEDMEAPIFKVLLHFIYWDELPDMQELIGTDSTLASTLVAQHLLAAADRYALERLKAICESKLCEGVAINTVATTLALAEQHHCLQLKAVCLKFVALPENLKAVMQTDGFDYLKESCPSLLTELLQYVARLSEHSVIVSGHRKEIFADGCDASGRRVKPRLH</sequence>
<organism>
    <name type="scientific">Arabidopsis thaliana</name>
    <name type="common">Mouse-ear cress</name>
    <dbReference type="NCBI Taxonomy" id="3702"/>
    <lineage>
        <taxon>Eukaryota</taxon>
        <taxon>Viridiplantae</taxon>
        <taxon>Streptophyta</taxon>
        <taxon>Embryophyta</taxon>
        <taxon>Tracheophyta</taxon>
        <taxon>Spermatophyta</taxon>
        <taxon>Magnoliopsida</taxon>
        <taxon>eudicotyledons</taxon>
        <taxon>Gunneridae</taxon>
        <taxon>Pentapetalae</taxon>
        <taxon>rosids</taxon>
        <taxon>malvids</taxon>
        <taxon>Brassicales</taxon>
        <taxon>Brassicaceae</taxon>
        <taxon>Camelineae</taxon>
        <taxon>Arabidopsis</taxon>
    </lineage>
</organism>
<gene>
    <name type="primary">BPM1</name>
    <name type="ordered locus">At5g19000</name>
    <name type="ORF">T16G12.40</name>
</gene>
<comment type="function">
    <text evidence="3">May act as a substrate-specific adapter of an E3 ubiquitin-protein ligase complex (CUL3-RBX1-BTB) which mediates the ubiquitination and subsequent proteasomal degradation of target proteins.</text>
</comment>
<comment type="pathway">
    <text>Protein modification; protein ubiquitination.</text>
</comment>
<comment type="subunit">
    <text evidence="3 4 5 6 7">Homodimer or heterodimer with BPM3, BPM5 and BPM6. Interacts with CUL3A and CUL3B. Interacts with RAP2-4 and RAP2-13. Binds to MYB56 at the promoter of FLOWERING LOCUS T (FT) (PubMed:25343985).</text>
</comment>
<comment type="interaction">
    <interactant intactId="EBI-540891">
        <id>Q8L765</id>
    </interactant>
    <interactant intactId="EBI-25510940">
        <id>F4JUM1</id>
        <label>ATSEC23F</label>
    </interactant>
    <organismsDiffer>false</organismsDiffer>
    <experiments>3</experiments>
</comment>
<comment type="interaction">
    <interactant intactId="EBI-540891">
        <id>Q8L765</id>
    </interactant>
    <interactant intactId="EBI-540891">
        <id>Q8L765</id>
        <label>BPM1</label>
    </interactant>
    <organismsDiffer>false</organismsDiffer>
    <experiments>2</experiments>
</comment>
<comment type="interaction">
    <interactant intactId="EBI-540891">
        <id>Q8L765</id>
    </interactant>
    <interactant intactId="EBI-25517863">
        <id>Q9SGS4</id>
        <label>CDSP32</label>
    </interactant>
    <organismsDiffer>false</organismsDiffer>
    <experiments>3</experiments>
</comment>
<comment type="interaction">
    <interactant intactId="EBI-540891">
        <id>Q8L765</id>
    </interactant>
    <interactant intactId="EBI-531362">
        <id>Q9ZVH4</id>
        <label>CUL3A</label>
    </interactant>
    <organismsDiffer>false</organismsDiffer>
    <experiments>5</experiments>
</comment>
<comment type="interaction">
    <interactant intactId="EBI-540891">
        <id>Q8L765</id>
    </interactant>
    <interactant intactId="EBI-541687">
        <id>Q9C9L0</id>
        <label>CUL3B</label>
    </interactant>
    <organismsDiffer>false</organismsDiffer>
    <experiments>3</experiments>
</comment>
<comment type="interaction">
    <interactant intactId="EBI-540891">
        <id>Q8L765</id>
    </interactant>
    <interactant intactId="EBI-7529041">
        <id>O65665</id>
        <label>ERF060</label>
    </interactant>
    <organismsDiffer>false</organismsDiffer>
    <experiments>4</experiments>
</comment>
<comment type="interaction">
    <interactant intactId="EBI-540891">
        <id>Q8L765</id>
    </interactant>
    <interactant intactId="EBI-2000137">
        <id>Q9MAI5</id>
        <label>ERF8</label>
    </interactant>
    <organismsDiffer>false</organismsDiffer>
    <experiments>3</experiments>
</comment>
<comment type="interaction">
    <interactant intactId="EBI-540891">
        <id>Q8L765</id>
    </interactant>
    <interactant intactId="EBI-4453280">
        <id>Q9FY93</id>
        <label>NAC083</label>
    </interactant>
    <organismsDiffer>false</organismsDiffer>
    <experiments>3</experiments>
</comment>
<comment type="interaction">
    <interactant intactId="EBI-540891">
        <id>Q8L765</id>
    </interactant>
    <interactant intactId="EBI-7528397">
        <id>Q9LM15</id>
        <label>RAP2-13</label>
    </interactant>
    <organismsDiffer>false</organismsDiffer>
    <experiments>2</experiments>
</comment>
<comment type="interaction">
    <interactant intactId="EBI-540891">
        <id>Q8L765</id>
    </interactant>
    <interactant intactId="EBI-7528315">
        <id>Q8H1E4</id>
        <label>RAP2-4</label>
    </interactant>
    <organismsDiffer>false</organismsDiffer>
    <experiments>5</experiments>
</comment>
<comment type="subcellular location">
    <subcellularLocation>
        <location evidence="6">Nucleus</location>
    </subcellularLocation>
</comment>
<comment type="alternative products">
    <event type="alternative splicing"/>
    <isoform>
        <id>Q8L765-1</id>
        <name>1</name>
        <sequence type="displayed"/>
    </isoform>
    <isoform>
        <id>Q8L765-2</id>
        <name>2</name>
        <sequence type="described" ref="VSP_040654"/>
    </isoform>
</comment>
<comment type="tissue specificity">
    <text evidence="3 6">Ubiquitous.</text>
</comment>
<comment type="induction">
    <text evidence="6">By drought.</text>
</comment>
<comment type="domain">
    <text>The BTB/POZ domain mediates the interaction with some component of ubiquitin ligase complexes.</text>
</comment>
<comment type="similarity">
    <text evidence="8">Belongs to the Tdpoz family.</text>
</comment>
<accession>Q8L765</accession>
<dbReference type="EMBL" id="AC068809">
    <property type="status" value="NOT_ANNOTATED_CDS"/>
    <property type="molecule type" value="Genomic_DNA"/>
</dbReference>
<dbReference type="EMBL" id="CP002688">
    <property type="protein sequence ID" value="AED92637.1"/>
    <property type="molecule type" value="Genomic_DNA"/>
</dbReference>
<dbReference type="EMBL" id="CP002688">
    <property type="protein sequence ID" value="AED92638.1"/>
    <property type="molecule type" value="Genomic_DNA"/>
</dbReference>
<dbReference type="EMBL" id="CP002688">
    <property type="protein sequence ID" value="ANM68871.1"/>
    <property type="molecule type" value="Genomic_DNA"/>
</dbReference>
<dbReference type="EMBL" id="AY136451">
    <property type="protein sequence ID" value="AAM97116.1"/>
    <property type="molecule type" value="mRNA"/>
</dbReference>
<dbReference type="EMBL" id="BT002593">
    <property type="protein sequence ID" value="AAO00953.1"/>
    <property type="molecule type" value="mRNA"/>
</dbReference>
<dbReference type="RefSeq" id="NP_001190334.1">
    <molecule id="Q8L765-2"/>
    <property type="nucleotide sequence ID" value="NM_001203405.1"/>
</dbReference>
<dbReference type="RefSeq" id="NP_001330589.1">
    <molecule id="Q8L765-1"/>
    <property type="nucleotide sequence ID" value="NM_001343580.1"/>
</dbReference>
<dbReference type="RefSeq" id="NP_197401.2">
    <molecule id="Q8L765-1"/>
    <property type="nucleotide sequence ID" value="NM_121905.3"/>
</dbReference>
<dbReference type="SMR" id="Q8L765"/>
<dbReference type="BioGRID" id="17294">
    <property type="interactions" value="20"/>
</dbReference>
<dbReference type="FunCoup" id="Q8L765">
    <property type="interactions" value="1991"/>
</dbReference>
<dbReference type="IntAct" id="Q8L765">
    <property type="interactions" value="13"/>
</dbReference>
<dbReference type="MINT" id="Q8L765"/>
<dbReference type="STRING" id="3702.Q8L765"/>
<dbReference type="PaxDb" id="3702-AT5G19000.2"/>
<dbReference type="ProteomicsDB" id="240478">
    <molecule id="Q8L765-1"/>
</dbReference>
<dbReference type="EnsemblPlants" id="AT5G19000.1">
    <molecule id="Q8L765-1"/>
    <property type="protein sequence ID" value="AT5G19000.1"/>
    <property type="gene ID" value="AT5G19000"/>
</dbReference>
<dbReference type="EnsemblPlants" id="AT5G19000.2">
    <molecule id="Q8L765-2"/>
    <property type="protein sequence ID" value="AT5G19000.2"/>
    <property type="gene ID" value="AT5G19000"/>
</dbReference>
<dbReference type="EnsemblPlants" id="AT5G19000.3">
    <molecule id="Q8L765-1"/>
    <property type="protein sequence ID" value="AT5G19000.3"/>
    <property type="gene ID" value="AT5G19000"/>
</dbReference>
<dbReference type="GeneID" id="832018"/>
<dbReference type="Gramene" id="AT5G19000.1">
    <molecule id="Q8L765-1"/>
    <property type="protein sequence ID" value="AT5G19000.1"/>
    <property type="gene ID" value="AT5G19000"/>
</dbReference>
<dbReference type="Gramene" id="AT5G19000.2">
    <molecule id="Q8L765-2"/>
    <property type="protein sequence ID" value="AT5G19000.2"/>
    <property type="gene ID" value="AT5G19000"/>
</dbReference>
<dbReference type="Gramene" id="AT5G19000.3">
    <molecule id="Q8L765-1"/>
    <property type="protein sequence ID" value="AT5G19000.3"/>
    <property type="gene ID" value="AT5G19000"/>
</dbReference>
<dbReference type="KEGG" id="ath:AT5G19000"/>
<dbReference type="Araport" id="AT5G19000"/>
<dbReference type="TAIR" id="AT5G19000">
    <property type="gene designation" value="BPM1"/>
</dbReference>
<dbReference type="eggNOG" id="KOG1987">
    <property type="taxonomic scope" value="Eukaryota"/>
</dbReference>
<dbReference type="HOGENOM" id="CLU_004253_2_0_1"/>
<dbReference type="InParanoid" id="Q8L765"/>
<dbReference type="OMA" id="GEIFTAH"/>
<dbReference type="OrthoDB" id="6359816at2759"/>
<dbReference type="PhylomeDB" id="Q8L765"/>
<dbReference type="UniPathway" id="UPA00143"/>
<dbReference type="PRO" id="PR:Q8L765"/>
<dbReference type="Proteomes" id="UP000006548">
    <property type="component" value="Chromosome 5"/>
</dbReference>
<dbReference type="ExpressionAtlas" id="Q8L765">
    <property type="expression patterns" value="baseline and differential"/>
</dbReference>
<dbReference type="GO" id="GO:0005634">
    <property type="term" value="C:nucleus"/>
    <property type="evidence" value="ECO:0000314"/>
    <property type="project" value="TAIR"/>
</dbReference>
<dbReference type="GO" id="GO:0042802">
    <property type="term" value="F:identical protein binding"/>
    <property type="evidence" value="ECO:0000353"/>
    <property type="project" value="IntAct"/>
</dbReference>
<dbReference type="GO" id="GO:0071472">
    <property type="term" value="P:cellular response to salt stress"/>
    <property type="evidence" value="ECO:0000270"/>
    <property type="project" value="TAIR"/>
</dbReference>
<dbReference type="GO" id="GO:0042631">
    <property type="term" value="P:cellular response to water deprivation"/>
    <property type="evidence" value="ECO:0000270"/>
    <property type="project" value="TAIR"/>
</dbReference>
<dbReference type="GO" id="GO:0016567">
    <property type="term" value="P:protein ubiquitination"/>
    <property type="evidence" value="ECO:0007669"/>
    <property type="project" value="UniProtKB-UniPathway"/>
</dbReference>
<dbReference type="GO" id="GO:0006970">
    <property type="term" value="P:response to osmotic stress"/>
    <property type="evidence" value="ECO:0000270"/>
    <property type="project" value="TAIR"/>
</dbReference>
<dbReference type="CDD" id="cd14736">
    <property type="entry name" value="BACK_AtBPM-like"/>
    <property type="match status" value="1"/>
</dbReference>
<dbReference type="CDD" id="cd18280">
    <property type="entry name" value="BTB_POZ_BPM_plant"/>
    <property type="match status" value="1"/>
</dbReference>
<dbReference type="CDD" id="cd00121">
    <property type="entry name" value="MATH"/>
    <property type="match status" value="1"/>
</dbReference>
<dbReference type="FunFam" id="1.25.40.420:FF:000023">
    <property type="entry name" value="BTB-POZ and math domain 1"/>
    <property type="match status" value="1"/>
</dbReference>
<dbReference type="FunFam" id="3.30.710.10:FF:000136">
    <property type="entry name" value="BTB-POZ and math domain 1"/>
    <property type="match status" value="1"/>
</dbReference>
<dbReference type="FunFam" id="2.60.210.10:FF:000012">
    <property type="entry name" value="BTB/POZ and MATH domain-containing protein 4"/>
    <property type="match status" value="1"/>
</dbReference>
<dbReference type="Gene3D" id="1.25.40.420">
    <property type="match status" value="1"/>
</dbReference>
<dbReference type="Gene3D" id="2.60.210.10">
    <property type="entry name" value="Apoptosis, Tumor Necrosis Factor Receptor Associated Protein 2, Chain A"/>
    <property type="match status" value="1"/>
</dbReference>
<dbReference type="Gene3D" id="3.30.710.10">
    <property type="entry name" value="Potassium Channel Kv1.1, Chain A"/>
    <property type="match status" value="1"/>
</dbReference>
<dbReference type="InterPro" id="IPR056423">
    <property type="entry name" value="BACK_BPM_SPOP"/>
</dbReference>
<dbReference type="InterPro" id="IPR045005">
    <property type="entry name" value="BPM1-6"/>
</dbReference>
<dbReference type="InterPro" id="IPR034090">
    <property type="entry name" value="BPM_C"/>
</dbReference>
<dbReference type="InterPro" id="IPR000210">
    <property type="entry name" value="BTB/POZ_dom"/>
</dbReference>
<dbReference type="InterPro" id="IPR002083">
    <property type="entry name" value="MATH/TRAF_dom"/>
</dbReference>
<dbReference type="InterPro" id="IPR011333">
    <property type="entry name" value="SKP1/BTB/POZ_sf"/>
</dbReference>
<dbReference type="InterPro" id="IPR008974">
    <property type="entry name" value="TRAF-like"/>
</dbReference>
<dbReference type="PANTHER" id="PTHR26379">
    <property type="entry name" value="BTB/POZ AND MATH DOMAIN-CONTAINING PROTEIN 1"/>
    <property type="match status" value="1"/>
</dbReference>
<dbReference type="PANTHER" id="PTHR26379:SF348">
    <property type="entry name" value="BTB_POZ AND MATH DOMAIN-CONTAINING PROTEIN 1"/>
    <property type="match status" value="1"/>
</dbReference>
<dbReference type="Pfam" id="PF24570">
    <property type="entry name" value="BACK_BPM_SPOP"/>
    <property type="match status" value="1"/>
</dbReference>
<dbReference type="Pfam" id="PF00651">
    <property type="entry name" value="BTB"/>
    <property type="match status" value="1"/>
</dbReference>
<dbReference type="Pfam" id="PF22486">
    <property type="entry name" value="MATH_2"/>
    <property type="match status" value="1"/>
</dbReference>
<dbReference type="SMART" id="SM00225">
    <property type="entry name" value="BTB"/>
    <property type="match status" value="1"/>
</dbReference>
<dbReference type="SMART" id="SM00061">
    <property type="entry name" value="MATH"/>
    <property type="match status" value="1"/>
</dbReference>
<dbReference type="SUPFAM" id="SSF54695">
    <property type="entry name" value="POZ domain"/>
    <property type="match status" value="1"/>
</dbReference>
<dbReference type="SUPFAM" id="SSF49599">
    <property type="entry name" value="TRAF domain-like"/>
    <property type="match status" value="1"/>
</dbReference>
<dbReference type="PROSITE" id="PS50097">
    <property type="entry name" value="BTB"/>
    <property type="match status" value="1"/>
</dbReference>
<dbReference type="PROSITE" id="PS50144">
    <property type="entry name" value="MATH"/>
    <property type="match status" value="1"/>
</dbReference>
<proteinExistence type="evidence at protein level"/>
<protein>
    <recommendedName>
        <fullName>BTB/POZ and MATH domain-containing protein 1</fullName>
    </recommendedName>
    <alternativeName>
        <fullName>Protein BTB-POZ AND MATH DOMAIN 1</fullName>
        <shortName>AtBPM1</shortName>
    </alternativeName>
</protein>
<evidence type="ECO:0000255" key="1">
    <source>
        <dbReference type="PROSITE-ProRule" id="PRU00037"/>
    </source>
</evidence>
<evidence type="ECO:0000255" key="2">
    <source>
        <dbReference type="PROSITE-ProRule" id="PRU00129"/>
    </source>
</evidence>
<evidence type="ECO:0000269" key="3">
    <source>
    </source>
</evidence>
<evidence type="ECO:0000269" key="4">
    <source>
    </source>
</evidence>
<evidence type="ECO:0000269" key="5">
    <source>
    </source>
</evidence>
<evidence type="ECO:0000269" key="6">
    <source>
    </source>
</evidence>
<evidence type="ECO:0000269" key="7">
    <source>
    </source>
</evidence>
<evidence type="ECO:0000305" key="8"/>
<name>BPM1_ARATH</name>
<feature type="chain" id="PRO_0000405265" description="BTB/POZ and MATH domain-containing protein 1">
    <location>
        <begin position="1"/>
        <end position="407"/>
    </location>
</feature>
<feature type="domain" description="MATH" evidence="2">
    <location>
        <begin position="33"/>
        <end position="167"/>
    </location>
</feature>
<feature type="domain" description="BTB" evidence="1">
    <location>
        <begin position="203"/>
        <end position="270"/>
    </location>
</feature>
<feature type="splice variant" id="VSP_040654" description="In isoform 2." evidence="8">
    <original>F</original>
    <variation>FKVLPLTLLLIVYSRMYHPGSSPGALLLFSSLLTRD</variation>
    <location>
        <position position="254"/>
    </location>
</feature>
<keyword id="KW-0025">Alternative splicing</keyword>
<keyword id="KW-0539">Nucleus</keyword>
<keyword id="KW-1185">Reference proteome</keyword>
<keyword id="KW-0833">Ubl conjugation pathway</keyword>